<gene>
    <name evidence="1" type="primary">rplF</name>
    <name type="ordered locus">BF3988</name>
</gene>
<proteinExistence type="inferred from homology"/>
<feature type="chain" id="PRO_0000265214" description="Large ribosomal subunit protein uL6">
    <location>
        <begin position="1"/>
        <end position="189"/>
    </location>
</feature>
<comment type="function">
    <text evidence="1">This protein binds to the 23S rRNA, and is important in its secondary structure. It is located near the subunit interface in the base of the L7/L12 stalk, and near the tRNA binding site of the peptidyltransferase center.</text>
</comment>
<comment type="subunit">
    <text evidence="1">Part of the 50S ribosomal subunit.</text>
</comment>
<comment type="similarity">
    <text evidence="1">Belongs to the universal ribosomal protein uL6 family.</text>
</comment>
<accession>Q5L8C4</accession>
<reference key="1">
    <citation type="journal article" date="2005" name="Science">
        <title>Extensive DNA inversions in the B. fragilis genome control variable gene expression.</title>
        <authorList>
            <person name="Cerdeno-Tarraga A.-M."/>
            <person name="Patrick S."/>
            <person name="Crossman L.C."/>
            <person name="Blakely G."/>
            <person name="Abratt V."/>
            <person name="Lennard N."/>
            <person name="Poxton I."/>
            <person name="Duerden B."/>
            <person name="Harris B."/>
            <person name="Quail M.A."/>
            <person name="Barron A."/>
            <person name="Clark L."/>
            <person name="Corton C."/>
            <person name="Doggett J."/>
            <person name="Holden M.T.G."/>
            <person name="Larke N."/>
            <person name="Line A."/>
            <person name="Lord A."/>
            <person name="Norbertczak H."/>
            <person name="Ormond D."/>
            <person name="Price C."/>
            <person name="Rabbinowitsch E."/>
            <person name="Woodward J."/>
            <person name="Barrell B.G."/>
            <person name="Parkhill J."/>
        </authorList>
    </citation>
    <scope>NUCLEOTIDE SEQUENCE [LARGE SCALE GENOMIC DNA]</scope>
    <source>
        <strain>ATCC 25285 / DSM 2151 / CCUG 4856 / JCM 11019 / LMG 10263 / NCTC 9343 / Onslow / VPI 2553 / EN-2</strain>
    </source>
</reference>
<protein>
    <recommendedName>
        <fullName evidence="1">Large ribosomal subunit protein uL6</fullName>
    </recommendedName>
    <alternativeName>
        <fullName evidence="2">50S ribosomal protein L6</fullName>
    </alternativeName>
</protein>
<sequence>MSRIGKLPISIPAGVTVTLKDDVVTVKGPKGELSQYVNPAINVAIEDGHITLTENENAMLDNPKQKHAFHGLYRSLVHNMVVGVSEGYKKELELVGVGYRASNQGNIIELALGYTHNIFIQLPPEVKVETKSERNKNPLILLESCDKQLLGQVCSKIRSFRKPEPYKGKGIKFVGEEIRRKSGKSAGAK</sequence>
<evidence type="ECO:0000255" key="1">
    <source>
        <dbReference type="HAMAP-Rule" id="MF_01365"/>
    </source>
</evidence>
<evidence type="ECO:0000305" key="2"/>
<name>RL6_BACFN</name>
<dbReference type="EMBL" id="CR626927">
    <property type="protein sequence ID" value="CAH09664.1"/>
    <property type="molecule type" value="Genomic_DNA"/>
</dbReference>
<dbReference type="RefSeq" id="WP_005791561.1">
    <property type="nucleotide sequence ID" value="NZ_UFTH01000001.1"/>
</dbReference>
<dbReference type="SMR" id="Q5L8C4"/>
<dbReference type="PaxDb" id="272559-BF9343_3883"/>
<dbReference type="GeneID" id="60368162"/>
<dbReference type="KEGG" id="bfs:BF9343_3883"/>
<dbReference type="eggNOG" id="COG0097">
    <property type="taxonomic scope" value="Bacteria"/>
</dbReference>
<dbReference type="HOGENOM" id="CLU_065464_1_2_10"/>
<dbReference type="Proteomes" id="UP000006731">
    <property type="component" value="Chromosome"/>
</dbReference>
<dbReference type="GO" id="GO:0022625">
    <property type="term" value="C:cytosolic large ribosomal subunit"/>
    <property type="evidence" value="ECO:0007669"/>
    <property type="project" value="TreeGrafter"/>
</dbReference>
<dbReference type="GO" id="GO:0019843">
    <property type="term" value="F:rRNA binding"/>
    <property type="evidence" value="ECO:0007669"/>
    <property type="project" value="UniProtKB-UniRule"/>
</dbReference>
<dbReference type="GO" id="GO:0003735">
    <property type="term" value="F:structural constituent of ribosome"/>
    <property type="evidence" value="ECO:0007669"/>
    <property type="project" value="InterPro"/>
</dbReference>
<dbReference type="GO" id="GO:0002181">
    <property type="term" value="P:cytoplasmic translation"/>
    <property type="evidence" value="ECO:0007669"/>
    <property type="project" value="TreeGrafter"/>
</dbReference>
<dbReference type="FunFam" id="3.90.930.12:FF:000002">
    <property type="entry name" value="50S ribosomal protein L6"/>
    <property type="match status" value="1"/>
</dbReference>
<dbReference type="FunFam" id="3.90.930.12:FF:000006">
    <property type="entry name" value="50S ribosomal protein L6"/>
    <property type="match status" value="1"/>
</dbReference>
<dbReference type="Gene3D" id="3.90.930.12">
    <property type="entry name" value="Ribosomal protein L6, alpha-beta domain"/>
    <property type="match status" value="2"/>
</dbReference>
<dbReference type="HAMAP" id="MF_01365_B">
    <property type="entry name" value="Ribosomal_uL6_B"/>
    <property type="match status" value="1"/>
</dbReference>
<dbReference type="InterPro" id="IPR000702">
    <property type="entry name" value="Ribosomal_uL6-like"/>
</dbReference>
<dbReference type="InterPro" id="IPR036789">
    <property type="entry name" value="Ribosomal_uL6-like_a/b-dom_sf"/>
</dbReference>
<dbReference type="InterPro" id="IPR020040">
    <property type="entry name" value="Ribosomal_uL6_a/b-dom"/>
</dbReference>
<dbReference type="InterPro" id="IPR019906">
    <property type="entry name" value="Ribosomal_uL6_bac-type"/>
</dbReference>
<dbReference type="InterPro" id="IPR002358">
    <property type="entry name" value="Ribosomal_uL6_CS"/>
</dbReference>
<dbReference type="NCBIfam" id="TIGR03654">
    <property type="entry name" value="L6_bact"/>
    <property type="match status" value="1"/>
</dbReference>
<dbReference type="PANTHER" id="PTHR11655">
    <property type="entry name" value="60S/50S RIBOSOMAL PROTEIN L6/L9"/>
    <property type="match status" value="1"/>
</dbReference>
<dbReference type="PANTHER" id="PTHR11655:SF14">
    <property type="entry name" value="LARGE RIBOSOMAL SUBUNIT PROTEIN UL6M"/>
    <property type="match status" value="1"/>
</dbReference>
<dbReference type="Pfam" id="PF00347">
    <property type="entry name" value="Ribosomal_L6"/>
    <property type="match status" value="2"/>
</dbReference>
<dbReference type="PIRSF" id="PIRSF002162">
    <property type="entry name" value="Ribosomal_L6"/>
    <property type="match status" value="1"/>
</dbReference>
<dbReference type="PRINTS" id="PR00059">
    <property type="entry name" value="RIBOSOMALL6"/>
</dbReference>
<dbReference type="SUPFAM" id="SSF56053">
    <property type="entry name" value="Ribosomal protein L6"/>
    <property type="match status" value="2"/>
</dbReference>
<dbReference type="PROSITE" id="PS00525">
    <property type="entry name" value="RIBOSOMAL_L6_1"/>
    <property type="match status" value="1"/>
</dbReference>
<organism>
    <name type="scientific">Bacteroides fragilis (strain ATCC 25285 / DSM 2151 / CCUG 4856 / JCM 11019 / LMG 10263 / NCTC 9343 / Onslow / VPI 2553 / EN-2)</name>
    <dbReference type="NCBI Taxonomy" id="272559"/>
    <lineage>
        <taxon>Bacteria</taxon>
        <taxon>Pseudomonadati</taxon>
        <taxon>Bacteroidota</taxon>
        <taxon>Bacteroidia</taxon>
        <taxon>Bacteroidales</taxon>
        <taxon>Bacteroidaceae</taxon>
        <taxon>Bacteroides</taxon>
    </lineage>
</organism>
<keyword id="KW-0687">Ribonucleoprotein</keyword>
<keyword id="KW-0689">Ribosomal protein</keyword>
<keyword id="KW-0694">RNA-binding</keyword>
<keyword id="KW-0699">rRNA-binding</keyword>